<proteinExistence type="evidence at protein level"/>
<evidence type="ECO:0000250" key="1"/>
<evidence type="ECO:0000250" key="2">
    <source>
        <dbReference type="UniProtKB" id="P10253"/>
    </source>
</evidence>
<evidence type="ECO:0000255" key="3"/>
<evidence type="ECO:0000255" key="4">
    <source>
        <dbReference type="PROSITE-ProRule" id="PRU00779"/>
    </source>
</evidence>
<evidence type="ECO:0000255" key="5">
    <source>
        <dbReference type="PROSITE-ProRule" id="PRU10066"/>
    </source>
</evidence>
<evidence type="ECO:0000269" key="6">
    <source>
    </source>
</evidence>
<evidence type="ECO:0000305" key="7"/>
<feature type="signal peptide" evidence="3">
    <location>
        <begin position="1"/>
        <end position="27"/>
    </location>
</feature>
<feature type="propeptide" id="PRO_0000018569" evidence="1">
    <location>
        <begin position="28"/>
        <end position="69"/>
    </location>
</feature>
<feature type="chain" id="PRO_0000018570" description="Lysosomal alpha-glucosidase">
    <location>
        <begin position="70"/>
        <end position="953"/>
    </location>
</feature>
<feature type="domain" description="P-type" evidence="4">
    <location>
        <begin position="80"/>
        <end position="131"/>
    </location>
</feature>
<feature type="active site" description="Nucleophile" evidence="5">
    <location>
        <position position="518"/>
    </location>
</feature>
<feature type="active site" evidence="1">
    <location>
        <position position="521"/>
    </location>
</feature>
<feature type="binding site" evidence="2">
    <location>
        <position position="404"/>
    </location>
    <ligand>
        <name>substrate</name>
    </ligand>
</feature>
<feature type="binding site" evidence="2">
    <location>
        <position position="600"/>
    </location>
    <ligand>
        <name>substrate</name>
    </ligand>
</feature>
<feature type="binding site" evidence="2">
    <location>
        <position position="616"/>
    </location>
    <ligand>
        <name>substrate</name>
    </ligand>
</feature>
<feature type="binding site" evidence="2">
    <location>
        <position position="674"/>
    </location>
    <ligand>
        <name>substrate</name>
    </ligand>
</feature>
<feature type="glycosylation site" description="N-linked (GlcNAc...) asparagine" evidence="6">
    <location>
        <position position="140"/>
    </location>
</feature>
<feature type="glycosylation site" description="N-linked (GlcNAc...) asparagine" evidence="3">
    <location>
        <position position="233"/>
    </location>
</feature>
<feature type="glycosylation site" description="N-linked (GlcNAc...) asparagine" evidence="3">
    <location>
        <position position="390"/>
    </location>
</feature>
<feature type="glycosylation site" description="N-linked (GlcNAc...) asparagine" evidence="6">
    <location>
        <position position="470"/>
    </location>
</feature>
<feature type="glycosylation site" description="N-linked (GlcNAc...) asparagine" evidence="3">
    <location>
        <position position="883"/>
    </location>
</feature>
<feature type="glycosylation site" description="N-linked (GlcNAc...) asparagine" evidence="3">
    <location>
        <position position="926"/>
    </location>
</feature>
<feature type="glycosylation site" description="N-linked (GlcNAc...) asparagine" evidence="3">
    <location>
        <position position="933"/>
    </location>
</feature>
<feature type="disulfide bond" evidence="4">
    <location>
        <begin position="82"/>
        <end position="109"/>
    </location>
</feature>
<feature type="disulfide bond" evidence="4">
    <location>
        <begin position="92"/>
        <end position="108"/>
    </location>
</feature>
<feature type="disulfide bond" evidence="4">
    <location>
        <begin position="103"/>
        <end position="127"/>
    </location>
</feature>
<feature type="disulfide bond" evidence="2">
    <location>
        <begin position="533"/>
        <end position="558"/>
    </location>
</feature>
<feature type="disulfide bond" evidence="2">
    <location>
        <begin position="647"/>
        <end position="658"/>
    </location>
</feature>
<feature type="sequence conflict" description="In Ref. 1; AAB06943." evidence="7" ref="1">
    <original>K</original>
    <variation>E</variation>
    <location>
        <position position="62"/>
    </location>
</feature>
<feature type="sequence conflict" description="In Ref. 1; AAB06943." evidence="7" ref="1">
    <original>S</original>
    <variation>A</variation>
    <location>
        <position position="254"/>
    </location>
</feature>
<feature type="sequence conflict" description="In Ref. 1; AAB06943." evidence="7" ref="1">
    <original>EL</original>
    <variation>DV</variation>
    <location>
        <begin position="430"/>
        <end position="431"/>
    </location>
</feature>
<feature type="sequence conflict" description="In Ref. 1 and 3." evidence="7" ref="1 3">
    <original>D</original>
    <variation>G</variation>
    <location>
        <position position="434"/>
    </location>
</feature>
<feature type="sequence conflict" description="In Ref. 1; AAB06943." evidence="7" ref="1">
    <original>W</original>
    <variation>C</variation>
    <location>
        <position position="481"/>
    </location>
</feature>
<feature type="sequence conflict" description="In Ref. 1; AAB06943." evidence="7" ref="1">
    <original>G</original>
    <variation>E</variation>
    <location>
        <position position="615"/>
    </location>
</feature>
<feature type="sequence conflict" description="In Ref. 1; AAB06943." evidence="7" ref="1">
    <original>S</original>
    <variation>T</variation>
    <location>
        <position position="619"/>
    </location>
</feature>
<feature type="sequence conflict" description="In Ref. 1; AAB06943." evidence="7" ref="1">
    <original>P</original>
    <variation>R</variation>
    <location>
        <position position="732"/>
    </location>
</feature>
<feature type="sequence conflict" description="In Ref. 1 and 3." evidence="7" ref="1 3">
    <original>M</original>
    <variation>V</variation>
    <location>
        <position position="777"/>
    </location>
</feature>
<feature type="sequence conflict" description="In Ref. 1; AAB06943." evidence="7" ref="1">
    <original>R</original>
    <variation>H</variation>
    <location>
        <position position="871"/>
    </location>
</feature>
<feature type="sequence conflict" description="In Ref. 1; AAB06943." evidence="7" ref="1">
    <original>R</original>
    <variation>K</variation>
    <location>
        <position position="903"/>
    </location>
</feature>
<protein>
    <recommendedName>
        <fullName>Lysosomal alpha-glucosidase</fullName>
        <ecNumber evidence="2">3.2.1.20</ecNumber>
    </recommendedName>
    <alternativeName>
        <fullName>Acid maltase</fullName>
    </alternativeName>
</protein>
<name>LYAG_MOUSE</name>
<accession>P70699</accession>
<accession>Q3UJB2</accession>
<accession>Q8BGI6</accession>
<accession>Q91Z45</accession>
<gene>
    <name type="primary">Gaa</name>
</gene>
<comment type="function">
    <text evidence="2">Essential for the degradation of glycogen in lysosomes. Has highest activity on alpha-1,4-linked glycosidic linkages, but can also hydrolyze alpha-1,6-linked glucans.</text>
</comment>
<comment type="catalytic activity">
    <reaction evidence="2">
        <text>Hydrolysis of terminal, non-reducing (1-&gt;4)-linked alpha-D-glucose residues with release of alpha-D-glucose.</text>
        <dbReference type="EC" id="3.2.1.20"/>
    </reaction>
</comment>
<comment type="subcellular location">
    <subcellularLocation>
        <location evidence="2">Lysosome</location>
    </subcellularLocation>
    <subcellularLocation>
        <location evidence="2">Lysosome membrane</location>
    </subcellularLocation>
</comment>
<comment type="similarity">
    <text evidence="7">Belongs to the glycosyl hydrolase 31 family.</text>
</comment>
<sequence>MNIRKPLCSNSVVGACTLISLTTAVILGHLMLRELMLLPQDLHESSSGLWKTYRPHHQEGYKPGPLHIQEQTEQPKEAPTQCDVPPSSRFDCAPDKGISQEQCEARGCCYVPAGQVLKEPQIGQPWCFFPPSYPSYRLENLSSTESGYTATLTRTSPTFFPKDVLTLQLEVLMETDSRLHFKIKDPASKRYEVPLETPRVLSQAPSPLYSVEFSEEPFGVIVRRKLGGRVLLNTTVAPLFFADQFLQLSTSLPSQHITGLGEHLSPLMLSTDWARITLWNRDTPPSQGTNLYGSHPFYLALEDGGLAHGVFLLNSNAMDVILQPSPALTWRSTGGILDVYVFLGPEPKSVVQQYLDVVGYPFMPPYWGLGFHLCRWGYSSTAIVRQVVENMTRTHFPLDVQWNDLDYMDARRDFTFNQDSFADFPDMVRELHQDGRRYMMIVDPAISSAGPAGSYRPYDEGLRRGVFITNETGQPLIGKVWPGTTAFPDFTNPETLDWWQDMVSEFHAQVPFDGMWLDMNEPSNFVRGSQQGCPNNELENPPYVPGVVGGILQAATICASSHQFLSTHYNLHNLYGLTEAIASSRALVKTRGTRPFVISRSTFSGHGRYAGHWTGDVRSSWEHLAYSVPDILQFNLLGVPLVGADICGFIGDTSEELCVRWTQLGAFYPFMRNHNDLNSVPQEPYRFSETAQQAMRKAFALRYALLPYLYTLFHRAHVRGDTVARPLFLEFPEDPSTWSVDRQLLWGPALLITPVLEPGKTEVTGYFPKGTWYNMQMVSVDSLGTLPSPSSASSFRSAVQSKGQWLTLEAPLDTINVHLREGYIIPLQGPSLTTTESRKQPMALAVALTASGEADGELFWDDGESLAVLERGAYTLVTFSAKNNTIVNKLVRVTKEGAELQLREVTVLGVATAPTQVLSNGIPVSNFTYSPDNKSLAIPVSLLMGELFQISWS</sequence>
<organism>
    <name type="scientific">Mus musculus</name>
    <name type="common">Mouse</name>
    <dbReference type="NCBI Taxonomy" id="10090"/>
    <lineage>
        <taxon>Eukaryota</taxon>
        <taxon>Metazoa</taxon>
        <taxon>Chordata</taxon>
        <taxon>Craniata</taxon>
        <taxon>Vertebrata</taxon>
        <taxon>Euteleostomi</taxon>
        <taxon>Mammalia</taxon>
        <taxon>Eutheria</taxon>
        <taxon>Euarchontoglires</taxon>
        <taxon>Glires</taxon>
        <taxon>Rodentia</taxon>
        <taxon>Myomorpha</taxon>
        <taxon>Muroidea</taxon>
        <taxon>Muridae</taxon>
        <taxon>Murinae</taxon>
        <taxon>Mus</taxon>
        <taxon>Mus</taxon>
    </lineage>
</organism>
<reference key="1">
    <citation type="submission" date="1996-09" db="EMBL/GenBank/DDBJ databases">
        <title>Cloning and characterization of the mouse liver cDNA encoding lysosomal alpha-glucosidase.</title>
        <authorList>
            <person name="Ding J.H."/>
            <person name="Yang B.Z."/>
            <person name="Reuser A.J.J."/>
            <person name="Roe C.R."/>
        </authorList>
    </citation>
    <scope>NUCLEOTIDE SEQUENCE [MRNA]</scope>
    <source>
        <strain>BALB/cJ</strain>
        <tissue>Liver</tissue>
    </source>
</reference>
<reference key="2">
    <citation type="journal article" date="2005" name="Science">
        <title>The transcriptional landscape of the mammalian genome.</title>
        <authorList>
            <person name="Carninci P."/>
            <person name="Kasukawa T."/>
            <person name="Katayama S."/>
            <person name="Gough J."/>
            <person name="Frith M.C."/>
            <person name="Maeda N."/>
            <person name="Oyama R."/>
            <person name="Ravasi T."/>
            <person name="Lenhard B."/>
            <person name="Wells C."/>
            <person name="Kodzius R."/>
            <person name="Shimokawa K."/>
            <person name="Bajic V.B."/>
            <person name="Brenner S.E."/>
            <person name="Batalov S."/>
            <person name="Forrest A.R."/>
            <person name="Zavolan M."/>
            <person name="Davis M.J."/>
            <person name="Wilming L.G."/>
            <person name="Aidinis V."/>
            <person name="Allen J.E."/>
            <person name="Ambesi-Impiombato A."/>
            <person name="Apweiler R."/>
            <person name="Aturaliya R.N."/>
            <person name="Bailey T.L."/>
            <person name="Bansal M."/>
            <person name="Baxter L."/>
            <person name="Beisel K.W."/>
            <person name="Bersano T."/>
            <person name="Bono H."/>
            <person name="Chalk A.M."/>
            <person name="Chiu K.P."/>
            <person name="Choudhary V."/>
            <person name="Christoffels A."/>
            <person name="Clutterbuck D.R."/>
            <person name="Crowe M.L."/>
            <person name="Dalla E."/>
            <person name="Dalrymple B.P."/>
            <person name="de Bono B."/>
            <person name="Della Gatta G."/>
            <person name="di Bernardo D."/>
            <person name="Down T."/>
            <person name="Engstrom P."/>
            <person name="Fagiolini M."/>
            <person name="Faulkner G."/>
            <person name="Fletcher C.F."/>
            <person name="Fukushima T."/>
            <person name="Furuno M."/>
            <person name="Futaki S."/>
            <person name="Gariboldi M."/>
            <person name="Georgii-Hemming P."/>
            <person name="Gingeras T.R."/>
            <person name="Gojobori T."/>
            <person name="Green R.E."/>
            <person name="Gustincich S."/>
            <person name="Harbers M."/>
            <person name="Hayashi Y."/>
            <person name="Hensch T.K."/>
            <person name="Hirokawa N."/>
            <person name="Hill D."/>
            <person name="Huminiecki L."/>
            <person name="Iacono M."/>
            <person name="Ikeo K."/>
            <person name="Iwama A."/>
            <person name="Ishikawa T."/>
            <person name="Jakt M."/>
            <person name="Kanapin A."/>
            <person name="Katoh M."/>
            <person name="Kawasawa Y."/>
            <person name="Kelso J."/>
            <person name="Kitamura H."/>
            <person name="Kitano H."/>
            <person name="Kollias G."/>
            <person name="Krishnan S.P."/>
            <person name="Kruger A."/>
            <person name="Kummerfeld S.K."/>
            <person name="Kurochkin I.V."/>
            <person name="Lareau L.F."/>
            <person name="Lazarevic D."/>
            <person name="Lipovich L."/>
            <person name="Liu J."/>
            <person name="Liuni S."/>
            <person name="McWilliam S."/>
            <person name="Madan Babu M."/>
            <person name="Madera M."/>
            <person name="Marchionni L."/>
            <person name="Matsuda H."/>
            <person name="Matsuzawa S."/>
            <person name="Miki H."/>
            <person name="Mignone F."/>
            <person name="Miyake S."/>
            <person name="Morris K."/>
            <person name="Mottagui-Tabar S."/>
            <person name="Mulder N."/>
            <person name="Nakano N."/>
            <person name="Nakauchi H."/>
            <person name="Ng P."/>
            <person name="Nilsson R."/>
            <person name="Nishiguchi S."/>
            <person name="Nishikawa S."/>
            <person name="Nori F."/>
            <person name="Ohara O."/>
            <person name="Okazaki Y."/>
            <person name="Orlando V."/>
            <person name="Pang K.C."/>
            <person name="Pavan W.J."/>
            <person name="Pavesi G."/>
            <person name="Pesole G."/>
            <person name="Petrovsky N."/>
            <person name="Piazza S."/>
            <person name="Reed J."/>
            <person name="Reid J.F."/>
            <person name="Ring B.Z."/>
            <person name="Ringwald M."/>
            <person name="Rost B."/>
            <person name="Ruan Y."/>
            <person name="Salzberg S.L."/>
            <person name="Sandelin A."/>
            <person name="Schneider C."/>
            <person name="Schoenbach C."/>
            <person name="Sekiguchi K."/>
            <person name="Semple C.A."/>
            <person name="Seno S."/>
            <person name="Sessa L."/>
            <person name="Sheng Y."/>
            <person name="Shibata Y."/>
            <person name="Shimada H."/>
            <person name="Shimada K."/>
            <person name="Silva D."/>
            <person name="Sinclair B."/>
            <person name="Sperling S."/>
            <person name="Stupka E."/>
            <person name="Sugiura K."/>
            <person name="Sultana R."/>
            <person name="Takenaka Y."/>
            <person name="Taki K."/>
            <person name="Tammoja K."/>
            <person name="Tan S.L."/>
            <person name="Tang S."/>
            <person name="Taylor M.S."/>
            <person name="Tegner J."/>
            <person name="Teichmann S.A."/>
            <person name="Ueda H.R."/>
            <person name="van Nimwegen E."/>
            <person name="Verardo R."/>
            <person name="Wei C.L."/>
            <person name="Yagi K."/>
            <person name="Yamanishi H."/>
            <person name="Zabarovsky E."/>
            <person name="Zhu S."/>
            <person name="Zimmer A."/>
            <person name="Hide W."/>
            <person name="Bult C."/>
            <person name="Grimmond S.M."/>
            <person name="Teasdale R.D."/>
            <person name="Liu E.T."/>
            <person name="Brusic V."/>
            <person name="Quackenbush J."/>
            <person name="Wahlestedt C."/>
            <person name="Mattick J.S."/>
            <person name="Hume D.A."/>
            <person name="Kai C."/>
            <person name="Sasaki D."/>
            <person name="Tomaru Y."/>
            <person name="Fukuda S."/>
            <person name="Kanamori-Katayama M."/>
            <person name="Suzuki M."/>
            <person name="Aoki J."/>
            <person name="Arakawa T."/>
            <person name="Iida J."/>
            <person name="Imamura K."/>
            <person name="Itoh M."/>
            <person name="Kato T."/>
            <person name="Kawaji H."/>
            <person name="Kawagashira N."/>
            <person name="Kawashima T."/>
            <person name="Kojima M."/>
            <person name="Kondo S."/>
            <person name="Konno H."/>
            <person name="Nakano K."/>
            <person name="Ninomiya N."/>
            <person name="Nishio T."/>
            <person name="Okada M."/>
            <person name="Plessy C."/>
            <person name="Shibata K."/>
            <person name="Shiraki T."/>
            <person name="Suzuki S."/>
            <person name="Tagami M."/>
            <person name="Waki K."/>
            <person name="Watahiki A."/>
            <person name="Okamura-Oho Y."/>
            <person name="Suzuki H."/>
            <person name="Kawai J."/>
            <person name="Hayashizaki Y."/>
        </authorList>
    </citation>
    <scope>NUCLEOTIDE SEQUENCE [LARGE SCALE MRNA]</scope>
    <source>
        <strain>C57BL/6J</strain>
        <strain>NOD</strain>
        <tissue>Bone marrow</tissue>
        <tissue>Brain cortex</tissue>
        <tissue>Heart</tissue>
        <tissue>Thymus</tissue>
    </source>
</reference>
<reference key="3">
    <citation type="journal article" date="2004" name="Genome Res.">
        <title>The status, quality, and expansion of the NIH full-length cDNA project: the Mammalian Gene Collection (MGC).</title>
        <authorList>
            <consortium name="The MGC Project Team"/>
        </authorList>
    </citation>
    <scope>NUCLEOTIDE SEQUENCE [LARGE SCALE MRNA]</scope>
    <source>
        <strain>FVB/N</strain>
        <tissue>Mammary tumor</tissue>
    </source>
</reference>
<reference key="4">
    <citation type="submission" date="2009-01" db="UniProtKB">
        <authorList>
            <person name="Lubec G."/>
            <person name="Sunyer B."/>
            <person name="Chen W.-Q."/>
        </authorList>
    </citation>
    <scope>PROTEIN SEQUENCE OF 376-385</scope>
    <scope>IDENTIFICATION BY MASS SPECTROMETRY</scope>
    <source>
        <strain>OF1</strain>
        <tissue>Hippocampus</tissue>
    </source>
</reference>
<reference key="5">
    <citation type="journal article" date="2009" name="Nat. Biotechnol.">
        <title>Mass-spectrometric identification and relative quantification of N-linked cell surface glycoproteins.</title>
        <authorList>
            <person name="Wollscheid B."/>
            <person name="Bausch-Fluck D."/>
            <person name="Henderson C."/>
            <person name="O'Brien R."/>
            <person name="Bibel M."/>
            <person name="Schiess R."/>
            <person name="Aebersold R."/>
            <person name="Watts J.D."/>
        </authorList>
    </citation>
    <scope>GLYCOSYLATION [LARGE SCALE ANALYSIS] AT ASN-140 AND ASN-470</scope>
</reference>
<reference key="6">
    <citation type="journal article" date="2010" name="Cell">
        <title>A tissue-specific atlas of mouse protein phosphorylation and expression.</title>
        <authorList>
            <person name="Huttlin E.L."/>
            <person name="Jedrychowski M.P."/>
            <person name="Elias J.E."/>
            <person name="Goswami T."/>
            <person name="Rad R."/>
            <person name="Beausoleil S.A."/>
            <person name="Villen J."/>
            <person name="Haas W."/>
            <person name="Sowa M.E."/>
            <person name="Gygi S.P."/>
        </authorList>
    </citation>
    <scope>IDENTIFICATION BY MASS SPECTROMETRY [LARGE SCALE ANALYSIS]</scope>
    <source>
        <tissue>Brain</tissue>
        <tissue>Brown adipose tissue</tissue>
        <tissue>Kidney</tissue>
        <tissue>Liver</tissue>
        <tissue>Lung</tissue>
        <tissue>Pancreas</tissue>
        <tissue>Spleen</tissue>
        <tissue>Testis</tissue>
    </source>
</reference>
<keyword id="KW-0903">Direct protein sequencing</keyword>
<keyword id="KW-1015">Disulfide bond</keyword>
<keyword id="KW-0325">Glycoprotein</keyword>
<keyword id="KW-0326">Glycosidase</keyword>
<keyword id="KW-0378">Hydrolase</keyword>
<keyword id="KW-0458">Lysosome</keyword>
<keyword id="KW-0472">Membrane</keyword>
<keyword id="KW-1185">Reference proteome</keyword>
<keyword id="KW-0732">Signal</keyword>
<dbReference type="EC" id="3.2.1.20" evidence="2"/>
<dbReference type="EMBL" id="U49351">
    <property type="protein sequence ID" value="AAB06943.1"/>
    <property type="molecule type" value="mRNA"/>
</dbReference>
<dbReference type="EMBL" id="AK052211">
    <property type="protein sequence ID" value="BAC34888.1"/>
    <property type="molecule type" value="mRNA"/>
</dbReference>
<dbReference type="EMBL" id="AK088481">
    <property type="protein sequence ID" value="BAC40382.1"/>
    <property type="molecule type" value="mRNA"/>
</dbReference>
<dbReference type="EMBL" id="AK139333">
    <property type="protein sequence ID" value="BAE23960.1"/>
    <property type="molecule type" value="mRNA"/>
</dbReference>
<dbReference type="EMBL" id="AK146538">
    <property type="protein sequence ID" value="BAE27243.1"/>
    <property type="molecule type" value="mRNA"/>
</dbReference>
<dbReference type="EMBL" id="AK150970">
    <property type="protein sequence ID" value="BAE30001.1"/>
    <property type="molecule type" value="mRNA"/>
</dbReference>
<dbReference type="EMBL" id="BC010210">
    <property type="protein sequence ID" value="AAH10210.1"/>
    <property type="molecule type" value="mRNA"/>
</dbReference>
<dbReference type="CCDS" id="CCDS25713.1"/>
<dbReference type="RefSeq" id="NP_001152796.1">
    <property type="nucleotide sequence ID" value="NM_001159324.2"/>
</dbReference>
<dbReference type="RefSeq" id="NP_032090.3">
    <property type="nucleotide sequence ID" value="NM_008064.4"/>
</dbReference>
<dbReference type="SMR" id="P70699"/>
<dbReference type="BioGRID" id="199792">
    <property type="interactions" value="22"/>
</dbReference>
<dbReference type="FunCoup" id="P70699">
    <property type="interactions" value="1049"/>
</dbReference>
<dbReference type="STRING" id="10090.ENSMUSP00000101866"/>
<dbReference type="BindingDB" id="P70699"/>
<dbReference type="ChEMBL" id="CHEMBL1667668"/>
<dbReference type="DrugCentral" id="P70699"/>
<dbReference type="CAZy" id="GH31">
    <property type="family name" value="Glycoside Hydrolase Family 31"/>
</dbReference>
<dbReference type="GlyConnect" id="2490">
    <property type="glycosylation" value="10 N-Linked glycans (5 sites)"/>
</dbReference>
<dbReference type="GlyCosmos" id="P70699">
    <property type="glycosylation" value="7 sites, 10 glycans"/>
</dbReference>
<dbReference type="GlyGen" id="P70699">
    <property type="glycosylation" value="8 sites, 13 N-linked glycans (5 sites), 1 O-linked glycan (1 site)"/>
</dbReference>
<dbReference type="iPTMnet" id="P70699"/>
<dbReference type="PhosphoSitePlus" id="P70699"/>
<dbReference type="SwissPalm" id="P70699"/>
<dbReference type="jPOST" id="P70699"/>
<dbReference type="PaxDb" id="10090-ENSMUSP00000101866"/>
<dbReference type="PeptideAtlas" id="P70699"/>
<dbReference type="ProteomicsDB" id="292061"/>
<dbReference type="Pumba" id="P70699"/>
<dbReference type="Antibodypedia" id="32676">
    <property type="antibodies" value="335 antibodies from 35 providers"/>
</dbReference>
<dbReference type="DNASU" id="14387"/>
<dbReference type="Ensembl" id="ENSMUST00000026666.13">
    <property type="protein sequence ID" value="ENSMUSP00000026666.7"/>
    <property type="gene ID" value="ENSMUSG00000025579.15"/>
</dbReference>
<dbReference type="Ensembl" id="ENSMUST00000106259.9">
    <property type="protein sequence ID" value="ENSMUSP00000101866.3"/>
    <property type="gene ID" value="ENSMUSG00000025579.15"/>
</dbReference>
<dbReference type="GeneID" id="14387"/>
<dbReference type="KEGG" id="mmu:14387"/>
<dbReference type="UCSC" id="uc007mqg.2">
    <property type="organism name" value="mouse"/>
</dbReference>
<dbReference type="AGR" id="MGI:95609"/>
<dbReference type="CTD" id="2548"/>
<dbReference type="MGI" id="MGI:95609">
    <property type="gene designation" value="Gaa"/>
</dbReference>
<dbReference type="VEuPathDB" id="HostDB:ENSMUSG00000025579"/>
<dbReference type="eggNOG" id="KOG1065">
    <property type="taxonomic scope" value="Eukaryota"/>
</dbReference>
<dbReference type="GeneTree" id="ENSGT00940000159355"/>
<dbReference type="HOGENOM" id="CLU_000631_11_2_1"/>
<dbReference type="InParanoid" id="P70699"/>
<dbReference type="OMA" id="YKGAVWP"/>
<dbReference type="OrthoDB" id="5839090at2759"/>
<dbReference type="PhylomeDB" id="P70699"/>
<dbReference type="TreeFam" id="TF314577"/>
<dbReference type="Reactome" id="R-MMU-6798695">
    <property type="pathway name" value="Neutrophil degranulation"/>
</dbReference>
<dbReference type="Reactome" id="R-MMU-70221">
    <property type="pathway name" value="Glycogen breakdown (glycogenolysis)"/>
</dbReference>
<dbReference type="BioGRID-ORCS" id="14387">
    <property type="hits" value="2 hits in 77 CRISPR screens"/>
</dbReference>
<dbReference type="ChiTaRS" id="Gaa">
    <property type="organism name" value="mouse"/>
</dbReference>
<dbReference type="PRO" id="PR:P70699"/>
<dbReference type="Proteomes" id="UP000000589">
    <property type="component" value="Chromosome 11"/>
</dbReference>
<dbReference type="RNAct" id="P70699">
    <property type="molecule type" value="protein"/>
</dbReference>
<dbReference type="Bgee" id="ENSMUSG00000025579">
    <property type="expression patterns" value="Expressed in arcuate nucleus of hypothalamus and 313 other cell types or tissues"/>
</dbReference>
<dbReference type="ExpressionAtlas" id="P70699">
    <property type="expression patterns" value="baseline and differential"/>
</dbReference>
<dbReference type="GO" id="GO:0120282">
    <property type="term" value="C:autolysosome lumen"/>
    <property type="evidence" value="ECO:0000315"/>
    <property type="project" value="MGI"/>
</dbReference>
<dbReference type="GO" id="GO:0005765">
    <property type="term" value="C:lysosomal membrane"/>
    <property type="evidence" value="ECO:0007669"/>
    <property type="project" value="UniProtKB-SubCell"/>
</dbReference>
<dbReference type="GO" id="GO:0005764">
    <property type="term" value="C:lysosome"/>
    <property type="evidence" value="ECO:0000315"/>
    <property type="project" value="MGI"/>
</dbReference>
<dbReference type="GO" id="GO:0016020">
    <property type="term" value="C:membrane"/>
    <property type="evidence" value="ECO:0000315"/>
    <property type="project" value="ParkinsonsUK-UCL"/>
</dbReference>
<dbReference type="GO" id="GO:0004558">
    <property type="term" value="F:alpha-1,4-glucosidase activity"/>
    <property type="evidence" value="ECO:0000314"/>
    <property type="project" value="MGI"/>
</dbReference>
<dbReference type="GO" id="GO:0030246">
    <property type="term" value="F:carbohydrate binding"/>
    <property type="evidence" value="ECO:0007669"/>
    <property type="project" value="InterPro"/>
</dbReference>
<dbReference type="GO" id="GO:0043896">
    <property type="term" value="F:glucan 1,6-alpha-glucosidase activity"/>
    <property type="evidence" value="ECO:0000266"/>
    <property type="project" value="MGI"/>
</dbReference>
<dbReference type="GO" id="GO:0035904">
    <property type="term" value="P:aorta development"/>
    <property type="evidence" value="ECO:0000315"/>
    <property type="project" value="MGI"/>
</dbReference>
<dbReference type="GO" id="GO:0060048">
    <property type="term" value="P:cardiac muscle contraction"/>
    <property type="evidence" value="ECO:0007669"/>
    <property type="project" value="Ensembl"/>
</dbReference>
<dbReference type="GO" id="GO:0002086">
    <property type="term" value="P:diaphragm contraction"/>
    <property type="evidence" value="ECO:0000315"/>
    <property type="project" value="MGI"/>
</dbReference>
<dbReference type="GO" id="GO:0005980">
    <property type="term" value="P:glycogen catabolic process"/>
    <property type="evidence" value="ECO:0000315"/>
    <property type="project" value="MGI"/>
</dbReference>
<dbReference type="GO" id="GO:0005977">
    <property type="term" value="P:glycogen metabolic process"/>
    <property type="evidence" value="ECO:0000315"/>
    <property type="project" value="MGI"/>
</dbReference>
<dbReference type="GO" id="GO:0061723">
    <property type="term" value="P:glycophagy"/>
    <property type="evidence" value="ECO:0000315"/>
    <property type="project" value="MGI"/>
</dbReference>
<dbReference type="GO" id="GO:0003007">
    <property type="term" value="P:heart morphogenesis"/>
    <property type="evidence" value="ECO:0000315"/>
    <property type="project" value="MGI"/>
</dbReference>
<dbReference type="GO" id="GO:0007626">
    <property type="term" value="P:locomotory behavior"/>
    <property type="evidence" value="ECO:0000315"/>
    <property type="project" value="MGI"/>
</dbReference>
<dbReference type="GO" id="GO:0007040">
    <property type="term" value="P:lysosome organization"/>
    <property type="evidence" value="ECO:0000315"/>
    <property type="project" value="MGI"/>
</dbReference>
<dbReference type="GO" id="GO:0046716">
    <property type="term" value="P:muscle cell cellular homeostasis"/>
    <property type="evidence" value="ECO:0000315"/>
    <property type="project" value="MGI"/>
</dbReference>
<dbReference type="GO" id="GO:0050885">
    <property type="term" value="P:neuromuscular process controlling balance"/>
    <property type="evidence" value="ECO:0000315"/>
    <property type="project" value="MGI"/>
</dbReference>
<dbReference type="GO" id="GO:0050884">
    <property type="term" value="P:neuromuscular process controlling posture"/>
    <property type="evidence" value="ECO:0000315"/>
    <property type="project" value="MGI"/>
</dbReference>
<dbReference type="GO" id="GO:0002026">
    <property type="term" value="P:regulation of the force of heart contraction"/>
    <property type="evidence" value="ECO:0000315"/>
    <property type="project" value="MGI"/>
</dbReference>
<dbReference type="GO" id="GO:0006941">
    <property type="term" value="P:striated muscle contraction"/>
    <property type="evidence" value="ECO:0000315"/>
    <property type="project" value="MGI"/>
</dbReference>
<dbReference type="GO" id="GO:0009888">
    <property type="term" value="P:tissue development"/>
    <property type="evidence" value="ECO:0000315"/>
    <property type="project" value="MGI"/>
</dbReference>
<dbReference type="GO" id="GO:0043181">
    <property type="term" value="P:vacuolar sequestering"/>
    <property type="evidence" value="ECO:0007669"/>
    <property type="project" value="Ensembl"/>
</dbReference>
<dbReference type="CDD" id="cd06602">
    <property type="entry name" value="GH31_MGAM_SI_GAA"/>
    <property type="match status" value="1"/>
</dbReference>
<dbReference type="CDD" id="cd14752">
    <property type="entry name" value="GH31_N"/>
    <property type="match status" value="1"/>
</dbReference>
<dbReference type="CDD" id="cd00111">
    <property type="entry name" value="Trefoil"/>
    <property type="match status" value="1"/>
</dbReference>
<dbReference type="FunFam" id="4.10.110.10:FF:000007">
    <property type="entry name" value="Lysosomal alpha-glucosidase"/>
    <property type="match status" value="1"/>
</dbReference>
<dbReference type="FunFam" id="3.20.20.80:FF:000072">
    <property type="entry name" value="lysosomal alpha-glucosidase isoform X2"/>
    <property type="match status" value="1"/>
</dbReference>
<dbReference type="FunFam" id="2.60.40.1180:FF:000001">
    <property type="entry name" value="Maltase-glucoamylase, intestinal"/>
    <property type="match status" value="1"/>
</dbReference>
<dbReference type="FunFam" id="2.60.40.1180:FF:000005">
    <property type="entry name" value="Maltase-glucoamylase, intestinal"/>
    <property type="match status" value="1"/>
</dbReference>
<dbReference type="FunFam" id="2.60.40.1760:FF:000001">
    <property type="entry name" value="Maltase-glucoamylase, intestinal"/>
    <property type="match status" value="1"/>
</dbReference>
<dbReference type="Gene3D" id="3.20.20.80">
    <property type="entry name" value="Glycosidases"/>
    <property type="match status" value="1"/>
</dbReference>
<dbReference type="Gene3D" id="2.60.40.1760">
    <property type="entry name" value="glycosyl hydrolase (family 31)"/>
    <property type="match status" value="1"/>
</dbReference>
<dbReference type="Gene3D" id="2.60.40.1180">
    <property type="entry name" value="Golgi alpha-mannosidase II"/>
    <property type="match status" value="2"/>
</dbReference>
<dbReference type="Gene3D" id="4.10.110.10">
    <property type="entry name" value="Spasmolytic Protein, domain 1"/>
    <property type="match status" value="1"/>
</dbReference>
<dbReference type="InterPro" id="IPR011013">
    <property type="entry name" value="Gal_mutarotase_sf_dom"/>
</dbReference>
<dbReference type="InterPro" id="IPR030458">
    <property type="entry name" value="Glyco_hydro_31_AS"/>
</dbReference>
<dbReference type="InterPro" id="IPR048395">
    <property type="entry name" value="Glyco_hydro_31_C"/>
</dbReference>
<dbReference type="InterPro" id="IPR030459">
    <property type="entry name" value="Glyco_hydro_31_CS"/>
</dbReference>
<dbReference type="InterPro" id="IPR025887">
    <property type="entry name" value="Glyco_hydro_31_N_dom"/>
</dbReference>
<dbReference type="InterPro" id="IPR000322">
    <property type="entry name" value="Glyco_hydro_31_TIM"/>
</dbReference>
<dbReference type="InterPro" id="IPR013780">
    <property type="entry name" value="Glyco_hydro_b"/>
</dbReference>
<dbReference type="InterPro" id="IPR017853">
    <property type="entry name" value="Glycoside_hydrolase_SF"/>
</dbReference>
<dbReference type="InterPro" id="IPR017957">
    <property type="entry name" value="P_trefoil_CS"/>
</dbReference>
<dbReference type="InterPro" id="IPR000519">
    <property type="entry name" value="P_trefoil_dom"/>
</dbReference>
<dbReference type="InterPro" id="IPR044913">
    <property type="entry name" value="P_trefoil_dom_sf"/>
</dbReference>
<dbReference type="PANTHER" id="PTHR22762">
    <property type="entry name" value="ALPHA-GLUCOSIDASE"/>
    <property type="match status" value="1"/>
</dbReference>
<dbReference type="PANTHER" id="PTHR22762:SF92">
    <property type="entry name" value="LYSOSOMAL ALPHA-GLUCOSIDASE"/>
    <property type="match status" value="1"/>
</dbReference>
<dbReference type="Pfam" id="PF13802">
    <property type="entry name" value="Gal_mutarotas_2"/>
    <property type="match status" value="1"/>
</dbReference>
<dbReference type="Pfam" id="PF01055">
    <property type="entry name" value="Glyco_hydro_31_2nd"/>
    <property type="match status" value="1"/>
</dbReference>
<dbReference type="Pfam" id="PF21365">
    <property type="entry name" value="Glyco_hydro_31_3rd"/>
    <property type="match status" value="1"/>
</dbReference>
<dbReference type="Pfam" id="PF00088">
    <property type="entry name" value="Trefoil"/>
    <property type="match status" value="1"/>
</dbReference>
<dbReference type="SMART" id="SM00018">
    <property type="entry name" value="PD"/>
    <property type="match status" value="1"/>
</dbReference>
<dbReference type="SUPFAM" id="SSF51445">
    <property type="entry name" value="(Trans)glycosidases"/>
    <property type="match status" value="1"/>
</dbReference>
<dbReference type="SUPFAM" id="SSF74650">
    <property type="entry name" value="Galactose mutarotase-like"/>
    <property type="match status" value="1"/>
</dbReference>
<dbReference type="SUPFAM" id="SSF51011">
    <property type="entry name" value="Glycosyl hydrolase domain"/>
    <property type="match status" value="1"/>
</dbReference>
<dbReference type="PROSITE" id="PS00129">
    <property type="entry name" value="GLYCOSYL_HYDROL_F31_1"/>
    <property type="match status" value="1"/>
</dbReference>
<dbReference type="PROSITE" id="PS00707">
    <property type="entry name" value="GLYCOSYL_HYDROL_F31_2"/>
    <property type="match status" value="1"/>
</dbReference>
<dbReference type="PROSITE" id="PS00025">
    <property type="entry name" value="P_TREFOIL_1"/>
    <property type="match status" value="1"/>
</dbReference>
<dbReference type="PROSITE" id="PS51448">
    <property type="entry name" value="P_TREFOIL_2"/>
    <property type="match status" value="1"/>
</dbReference>